<reference key="1">
    <citation type="journal article" date="2008" name="PLoS ONE">
        <title>Genome biology of Actinobacillus pleuropneumoniae JL03, an isolate of serotype 3 prevalent in China.</title>
        <authorList>
            <person name="Xu Z."/>
            <person name="Zhou Y."/>
            <person name="Li L."/>
            <person name="Zhou R."/>
            <person name="Xiao S."/>
            <person name="Wan Y."/>
            <person name="Zhang S."/>
            <person name="Wang K."/>
            <person name="Li W."/>
            <person name="Li L."/>
            <person name="Jin H."/>
            <person name="Kang M."/>
            <person name="Dalai B."/>
            <person name="Li T."/>
            <person name="Liu L."/>
            <person name="Cheng Y."/>
            <person name="Zhang L."/>
            <person name="Xu T."/>
            <person name="Zheng H."/>
            <person name="Pu S."/>
            <person name="Wang B."/>
            <person name="Gu W."/>
            <person name="Zhang X.L."/>
            <person name="Zhu G.-F."/>
            <person name="Wang S."/>
            <person name="Zhao G.-P."/>
            <person name="Chen H."/>
        </authorList>
    </citation>
    <scope>NUCLEOTIDE SEQUENCE [LARGE SCALE GENOMIC DNA]</scope>
    <source>
        <strain>JL03</strain>
    </source>
</reference>
<sequence>MNTCTPNIKSSYTYEDLLASGRGELFGKEGPQLPAPTMLMMDRINLMTENGGLFDKGYIEAELDIHPDLPFFSCHFIGDPVMPGCLGLDAMWQLVGFFLGWIGGKGKGRALGVGEVKFTGQILPNAKKVTYRIHMKRVINRKLVMGMADGEVEVDGRVIYTATDLKVGLFQDTSAF</sequence>
<organism>
    <name type="scientific">Actinobacillus pleuropneumoniae serotype 3 (strain JL03)</name>
    <dbReference type="NCBI Taxonomy" id="434271"/>
    <lineage>
        <taxon>Bacteria</taxon>
        <taxon>Pseudomonadati</taxon>
        <taxon>Pseudomonadota</taxon>
        <taxon>Gammaproteobacteria</taxon>
        <taxon>Pasteurellales</taxon>
        <taxon>Pasteurellaceae</taxon>
        <taxon>Actinobacillus</taxon>
    </lineage>
</organism>
<keyword id="KW-0963">Cytoplasm</keyword>
<keyword id="KW-0275">Fatty acid biosynthesis</keyword>
<keyword id="KW-0276">Fatty acid metabolism</keyword>
<keyword id="KW-0413">Isomerase</keyword>
<keyword id="KW-0444">Lipid biosynthesis</keyword>
<keyword id="KW-0443">Lipid metabolism</keyword>
<keyword id="KW-0456">Lyase</keyword>
<accession>B0BTG8</accession>
<evidence type="ECO:0000255" key="1">
    <source>
        <dbReference type="HAMAP-Rule" id="MF_00405"/>
    </source>
</evidence>
<proteinExistence type="inferred from homology"/>
<dbReference type="EC" id="4.2.1.59" evidence="1"/>
<dbReference type="EC" id="5.3.3.14" evidence="1"/>
<dbReference type="EMBL" id="CP000687">
    <property type="protein sequence ID" value="ABY70482.1"/>
    <property type="molecule type" value="Genomic_DNA"/>
</dbReference>
<dbReference type="RefSeq" id="WP_005602774.1">
    <property type="nucleotide sequence ID" value="NC_010278.1"/>
</dbReference>
<dbReference type="SMR" id="B0BTG8"/>
<dbReference type="KEGG" id="apj:APJL_1932"/>
<dbReference type="HOGENOM" id="CLU_097925_0_0_6"/>
<dbReference type="UniPathway" id="UPA00094"/>
<dbReference type="Proteomes" id="UP000008547">
    <property type="component" value="Chromosome"/>
</dbReference>
<dbReference type="GO" id="GO:0005737">
    <property type="term" value="C:cytoplasm"/>
    <property type="evidence" value="ECO:0007669"/>
    <property type="project" value="UniProtKB-SubCell"/>
</dbReference>
<dbReference type="GO" id="GO:0019171">
    <property type="term" value="F:(3R)-hydroxyacyl-[acyl-carrier-protein] dehydratase activity"/>
    <property type="evidence" value="ECO:0007669"/>
    <property type="project" value="UniProtKB-UniRule"/>
</dbReference>
<dbReference type="GO" id="GO:0034017">
    <property type="term" value="F:trans-2-decenoyl-acyl-carrier-protein isomerase activity"/>
    <property type="evidence" value="ECO:0007669"/>
    <property type="project" value="UniProtKB-UniRule"/>
</dbReference>
<dbReference type="GO" id="GO:0006636">
    <property type="term" value="P:unsaturated fatty acid biosynthetic process"/>
    <property type="evidence" value="ECO:0007669"/>
    <property type="project" value="UniProtKB-UniRule"/>
</dbReference>
<dbReference type="CDD" id="cd01287">
    <property type="entry name" value="FabA"/>
    <property type="match status" value="1"/>
</dbReference>
<dbReference type="FunFam" id="3.10.129.10:FF:000003">
    <property type="entry name" value="3-hydroxydecanoyl-[acyl-carrier-protein] dehydratase"/>
    <property type="match status" value="1"/>
</dbReference>
<dbReference type="Gene3D" id="3.10.129.10">
    <property type="entry name" value="Hotdog Thioesterase"/>
    <property type="match status" value="1"/>
</dbReference>
<dbReference type="HAMAP" id="MF_00405">
    <property type="entry name" value="FabA"/>
    <property type="match status" value="1"/>
</dbReference>
<dbReference type="InterPro" id="IPR010083">
    <property type="entry name" value="FabA"/>
</dbReference>
<dbReference type="InterPro" id="IPR013114">
    <property type="entry name" value="FabA_FabZ"/>
</dbReference>
<dbReference type="InterPro" id="IPR029069">
    <property type="entry name" value="HotDog_dom_sf"/>
</dbReference>
<dbReference type="NCBIfam" id="TIGR01749">
    <property type="entry name" value="fabA"/>
    <property type="match status" value="1"/>
</dbReference>
<dbReference type="NCBIfam" id="NF003509">
    <property type="entry name" value="PRK05174.1"/>
    <property type="match status" value="1"/>
</dbReference>
<dbReference type="PANTHER" id="PTHR30272">
    <property type="entry name" value="3-HYDROXYACYL-[ACYL-CARRIER-PROTEIN] DEHYDRATASE"/>
    <property type="match status" value="1"/>
</dbReference>
<dbReference type="PANTHER" id="PTHR30272:SF8">
    <property type="entry name" value="3-HYDROXYDECANOYL-[ACYL-CARRIER-PROTEIN] DEHYDRATASE"/>
    <property type="match status" value="1"/>
</dbReference>
<dbReference type="Pfam" id="PF07977">
    <property type="entry name" value="FabA"/>
    <property type="match status" value="1"/>
</dbReference>
<dbReference type="SUPFAM" id="SSF54637">
    <property type="entry name" value="Thioesterase/thiol ester dehydrase-isomerase"/>
    <property type="match status" value="1"/>
</dbReference>
<comment type="function">
    <text evidence="1">Necessary for the introduction of cis unsaturation into fatty acids. Catalyzes the dehydration of (3R)-3-hydroxydecanoyl-ACP to E-(2)-decenoyl-ACP and then its isomerization to Z-(3)-decenoyl-ACP. Can catalyze the dehydratase reaction for beta-hydroxyacyl-ACPs with saturated chain lengths up to 16:0, being most active on intermediate chain length.</text>
</comment>
<comment type="catalytic activity">
    <reaction evidence="1">
        <text>a (3R)-hydroxyacyl-[ACP] = a (2E)-enoyl-[ACP] + H2O</text>
        <dbReference type="Rhea" id="RHEA:13097"/>
        <dbReference type="Rhea" id="RHEA-COMP:9925"/>
        <dbReference type="Rhea" id="RHEA-COMP:9945"/>
        <dbReference type="ChEBI" id="CHEBI:15377"/>
        <dbReference type="ChEBI" id="CHEBI:78784"/>
        <dbReference type="ChEBI" id="CHEBI:78827"/>
        <dbReference type="EC" id="4.2.1.59"/>
    </reaction>
</comment>
<comment type="catalytic activity">
    <reaction evidence="1">
        <text>(3R)-hydroxydecanoyl-[ACP] = (2E)-decenoyl-[ACP] + H2O</text>
        <dbReference type="Rhea" id="RHEA:41860"/>
        <dbReference type="Rhea" id="RHEA-COMP:9638"/>
        <dbReference type="Rhea" id="RHEA-COMP:9639"/>
        <dbReference type="ChEBI" id="CHEBI:15377"/>
        <dbReference type="ChEBI" id="CHEBI:78466"/>
        <dbReference type="ChEBI" id="CHEBI:78467"/>
    </reaction>
</comment>
<comment type="catalytic activity">
    <reaction evidence="1">
        <text>(2E)-decenoyl-[ACP] = (3Z)-decenoyl-[ACP]</text>
        <dbReference type="Rhea" id="RHEA:23568"/>
        <dbReference type="Rhea" id="RHEA-COMP:9639"/>
        <dbReference type="Rhea" id="RHEA-COMP:9927"/>
        <dbReference type="ChEBI" id="CHEBI:78467"/>
        <dbReference type="ChEBI" id="CHEBI:78798"/>
        <dbReference type="EC" id="5.3.3.14"/>
    </reaction>
</comment>
<comment type="pathway">
    <text evidence="1">Lipid metabolism; fatty acid biosynthesis.</text>
</comment>
<comment type="subunit">
    <text evidence="1">Homodimer.</text>
</comment>
<comment type="subcellular location">
    <subcellularLocation>
        <location evidence="1">Cytoplasm</location>
    </subcellularLocation>
</comment>
<comment type="similarity">
    <text evidence="1">Belongs to the thioester dehydratase family. FabA subfamily.</text>
</comment>
<feature type="chain" id="PRO_1000201166" description="3-hydroxydecanoyl-[acyl-carrier-protein] dehydratase">
    <location>
        <begin position="1"/>
        <end position="176"/>
    </location>
</feature>
<feature type="active site" evidence="1">
    <location>
        <position position="75"/>
    </location>
</feature>
<gene>
    <name evidence="1" type="primary">fabA</name>
    <name type="ordered locus">APJL_1932</name>
</gene>
<protein>
    <recommendedName>
        <fullName evidence="1">3-hydroxydecanoyl-[acyl-carrier-protein] dehydratase</fullName>
        <ecNumber evidence="1">4.2.1.59</ecNumber>
    </recommendedName>
    <alternativeName>
        <fullName evidence="1">3-hydroxyacyl-[acyl-carrier-protein] dehydratase FabA</fullName>
    </alternativeName>
    <alternativeName>
        <fullName evidence="1">Beta-hydroxydecanoyl thioester dehydrase</fullName>
    </alternativeName>
    <alternativeName>
        <fullName evidence="1">Trans-2-decenoyl-[acyl-carrier-protein] isomerase</fullName>
        <ecNumber evidence="1">5.3.3.14</ecNumber>
    </alternativeName>
</protein>
<name>FABA_ACTPJ</name>